<keyword id="KW-1185">Reference proteome</keyword>
<keyword id="KW-0687">Ribonucleoprotein</keyword>
<keyword id="KW-0689">Ribosomal protein</keyword>
<proteinExistence type="inferred from homology"/>
<feature type="chain" id="PRO_1000060715" description="Small ribosomal subunit protein bS16">
    <location>
        <begin position="1"/>
        <end position="98"/>
    </location>
</feature>
<name>RS16_PSELT</name>
<comment type="similarity">
    <text evidence="1">Belongs to the bacterial ribosomal protein bS16 family.</text>
</comment>
<reference key="1">
    <citation type="submission" date="2007-08" db="EMBL/GenBank/DDBJ databases">
        <title>Complete sequence of Thermotoga lettingae TMO.</title>
        <authorList>
            <consortium name="US DOE Joint Genome Institute"/>
            <person name="Copeland A."/>
            <person name="Lucas S."/>
            <person name="Lapidus A."/>
            <person name="Barry K."/>
            <person name="Glavina del Rio T."/>
            <person name="Dalin E."/>
            <person name="Tice H."/>
            <person name="Pitluck S."/>
            <person name="Foster B."/>
            <person name="Bruce D."/>
            <person name="Schmutz J."/>
            <person name="Larimer F."/>
            <person name="Land M."/>
            <person name="Hauser L."/>
            <person name="Kyrpides N."/>
            <person name="Mikhailova N."/>
            <person name="Nelson K."/>
            <person name="Gogarten J.P."/>
            <person name="Noll K."/>
            <person name="Richardson P."/>
        </authorList>
    </citation>
    <scope>NUCLEOTIDE SEQUENCE [LARGE SCALE GENOMIC DNA]</scope>
    <source>
        <strain>ATCC BAA-301 / DSM 14385 / NBRC 107922 / TMO</strain>
    </source>
</reference>
<accession>A8F3G4</accession>
<gene>
    <name evidence="1" type="primary">rpsP</name>
    <name type="ordered locus">Tlet_0128</name>
</gene>
<evidence type="ECO:0000255" key="1">
    <source>
        <dbReference type="HAMAP-Rule" id="MF_00385"/>
    </source>
</evidence>
<evidence type="ECO:0000305" key="2"/>
<organism>
    <name type="scientific">Pseudothermotoga lettingae (strain ATCC BAA-301 / DSM 14385 / NBRC 107922 / TMO)</name>
    <name type="common">Thermotoga lettingae</name>
    <dbReference type="NCBI Taxonomy" id="416591"/>
    <lineage>
        <taxon>Bacteria</taxon>
        <taxon>Thermotogati</taxon>
        <taxon>Thermotogota</taxon>
        <taxon>Thermotogae</taxon>
        <taxon>Thermotogales</taxon>
        <taxon>Thermotogaceae</taxon>
        <taxon>Pseudothermotoga</taxon>
    </lineage>
</organism>
<sequence length="98" mass="11245">MVRIRLTRMGKRHMPFYRIVVVDSRKRRDGAYIESLGYYNPLRKPAEIKVNVERAVEWILKGAQPSETAANILSKAGVLAKVHEMKYGKREKSDEGVS</sequence>
<dbReference type="EMBL" id="CP000812">
    <property type="protein sequence ID" value="ABV32698.1"/>
    <property type="molecule type" value="Genomic_DNA"/>
</dbReference>
<dbReference type="RefSeq" id="WP_012002179.1">
    <property type="nucleotide sequence ID" value="NZ_BSDV01000001.1"/>
</dbReference>
<dbReference type="SMR" id="A8F3G4"/>
<dbReference type="STRING" id="416591.Tlet_0128"/>
<dbReference type="KEGG" id="tle:Tlet_0128"/>
<dbReference type="eggNOG" id="COG0228">
    <property type="taxonomic scope" value="Bacteria"/>
</dbReference>
<dbReference type="HOGENOM" id="CLU_100590_5_2_0"/>
<dbReference type="OrthoDB" id="9807878at2"/>
<dbReference type="Proteomes" id="UP000002016">
    <property type="component" value="Chromosome"/>
</dbReference>
<dbReference type="GO" id="GO:0005737">
    <property type="term" value="C:cytoplasm"/>
    <property type="evidence" value="ECO:0007669"/>
    <property type="project" value="UniProtKB-ARBA"/>
</dbReference>
<dbReference type="GO" id="GO:0015935">
    <property type="term" value="C:small ribosomal subunit"/>
    <property type="evidence" value="ECO:0007669"/>
    <property type="project" value="TreeGrafter"/>
</dbReference>
<dbReference type="GO" id="GO:0003735">
    <property type="term" value="F:structural constituent of ribosome"/>
    <property type="evidence" value="ECO:0007669"/>
    <property type="project" value="InterPro"/>
</dbReference>
<dbReference type="GO" id="GO:0006412">
    <property type="term" value="P:translation"/>
    <property type="evidence" value="ECO:0007669"/>
    <property type="project" value="UniProtKB-UniRule"/>
</dbReference>
<dbReference type="FunFam" id="3.30.1320.10:FF:000005">
    <property type="entry name" value="30S ribosomal protein S16"/>
    <property type="match status" value="1"/>
</dbReference>
<dbReference type="Gene3D" id="3.30.1320.10">
    <property type="match status" value="1"/>
</dbReference>
<dbReference type="HAMAP" id="MF_00385">
    <property type="entry name" value="Ribosomal_bS16"/>
    <property type="match status" value="1"/>
</dbReference>
<dbReference type="InterPro" id="IPR000307">
    <property type="entry name" value="Ribosomal_bS16"/>
</dbReference>
<dbReference type="InterPro" id="IPR020592">
    <property type="entry name" value="Ribosomal_bS16_CS"/>
</dbReference>
<dbReference type="InterPro" id="IPR023803">
    <property type="entry name" value="Ribosomal_bS16_dom_sf"/>
</dbReference>
<dbReference type="NCBIfam" id="TIGR00002">
    <property type="entry name" value="S16"/>
    <property type="match status" value="1"/>
</dbReference>
<dbReference type="PANTHER" id="PTHR12919">
    <property type="entry name" value="30S RIBOSOMAL PROTEIN S16"/>
    <property type="match status" value="1"/>
</dbReference>
<dbReference type="PANTHER" id="PTHR12919:SF20">
    <property type="entry name" value="SMALL RIBOSOMAL SUBUNIT PROTEIN BS16M"/>
    <property type="match status" value="1"/>
</dbReference>
<dbReference type="Pfam" id="PF00886">
    <property type="entry name" value="Ribosomal_S16"/>
    <property type="match status" value="1"/>
</dbReference>
<dbReference type="SUPFAM" id="SSF54565">
    <property type="entry name" value="Ribosomal protein S16"/>
    <property type="match status" value="1"/>
</dbReference>
<dbReference type="PROSITE" id="PS00732">
    <property type="entry name" value="RIBOSOMAL_S16"/>
    <property type="match status" value="1"/>
</dbReference>
<protein>
    <recommendedName>
        <fullName evidence="1">Small ribosomal subunit protein bS16</fullName>
    </recommendedName>
    <alternativeName>
        <fullName evidence="2">30S ribosomal protein S16</fullName>
    </alternativeName>
</protein>